<gene>
    <name evidence="1" type="primary">argR</name>
    <name type="ordered locus">APP7_1346</name>
</gene>
<dbReference type="EMBL" id="CP001091">
    <property type="protein sequence ID" value="ACE61998.1"/>
    <property type="molecule type" value="Genomic_DNA"/>
</dbReference>
<dbReference type="RefSeq" id="WP_005598350.1">
    <property type="nucleotide sequence ID" value="NC_010939.1"/>
</dbReference>
<dbReference type="SMR" id="B3H268"/>
<dbReference type="GeneID" id="48599540"/>
<dbReference type="KEGG" id="apa:APP7_1346"/>
<dbReference type="HOGENOM" id="CLU_097103_2_0_6"/>
<dbReference type="UniPathway" id="UPA00068"/>
<dbReference type="Proteomes" id="UP000001226">
    <property type="component" value="Chromosome"/>
</dbReference>
<dbReference type="GO" id="GO:0005737">
    <property type="term" value="C:cytoplasm"/>
    <property type="evidence" value="ECO:0007669"/>
    <property type="project" value="UniProtKB-SubCell"/>
</dbReference>
<dbReference type="GO" id="GO:0034618">
    <property type="term" value="F:arginine binding"/>
    <property type="evidence" value="ECO:0007669"/>
    <property type="project" value="InterPro"/>
</dbReference>
<dbReference type="GO" id="GO:0003677">
    <property type="term" value="F:DNA binding"/>
    <property type="evidence" value="ECO:0007669"/>
    <property type="project" value="UniProtKB-KW"/>
</dbReference>
<dbReference type="GO" id="GO:0003700">
    <property type="term" value="F:DNA-binding transcription factor activity"/>
    <property type="evidence" value="ECO:0007669"/>
    <property type="project" value="UniProtKB-UniRule"/>
</dbReference>
<dbReference type="GO" id="GO:0006526">
    <property type="term" value="P:L-arginine biosynthetic process"/>
    <property type="evidence" value="ECO:0007669"/>
    <property type="project" value="UniProtKB-UniPathway"/>
</dbReference>
<dbReference type="GO" id="GO:0051259">
    <property type="term" value="P:protein complex oligomerization"/>
    <property type="evidence" value="ECO:0007669"/>
    <property type="project" value="InterPro"/>
</dbReference>
<dbReference type="GO" id="GO:1900079">
    <property type="term" value="P:regulation of arginine biosynthetic process"/>
    <property type="evidence" value="ECO:0007669"/>
    <property type="project" value="UniProtKB-UniRule"/>
</dbReference>
<dbReference type="Gene3D" id="3.30.1360.40">
    <property type="match status" value="1"/>
</dbReference>
<dbReference type="Gene3D" id="1.10.10.10">
    <property type="entry name" value="Winged helix-like DNA-binding domain superfamily/Winged helix DNA-binding domain"/>
    <property type="match status" value="1"/>
</dbReference>
<dbReference type="HAMAP" id="MF_00173">
    <property type="entry name" value="Arg_repressor"/>
    <property type="match status" value="1"/>
</dbReference>
<dbReference type="InterPro" id="IPR001669">
    <property type="entry name" value="Arg_repress"/>
</dbReference>
<dbReference type="InterPro" id="IPR020899">
    <property type="entry name" value="Arg_repress_C"/>
</dbReference>
<dbReference type="InterPro" id="IPR036251">
    <property type="entry name" value="Arg_repress_C_sf"/>
</dbReference>
<dbReference type="InterPro" id="IPR020900">
    <property type="entry name" value="Arg_repress_DNA-bd"/>
</dbReference>
<dbReference type="InterPro" id="IPR036388">
    <property type="entry name" value="WH-like_DNA-bd_sf"/>
</dbReference>
<dbReference type="InterPro" id="IPR036390">
    <property type="entry name" value="WH_DNA-bd_sf"/>
</dbReference>
<dbReference type="NCBIfam" id="TIGR01529">
    <property type="entry name" value="argR_whole"/>
    <property type="match status" value="1"/>
</dbReference>
<dbReference type="NCBIfam" id="NF003457">
    <property type="entry name" value="PRK05066.1"/>
    <property type="match status" value="1"/>
</dbReference>
<dbReference type="PANTHER" id="PTHR34471">
    <property type="entry name" value="ARGININE REPRESSOR"/>
    <property type="match status" value="1"/>
</dbReference>
<dbReference type="PANTHER" id="PTHR34471:SF1">
    <property type="entry name" value="ARGININE REPRESSOR"/>
    <property type="match status" value="1"/>
</dbReference>
<dbReference type="Pfam" id="PF01316">
    <property type="entry name" value="Arg_repressor"/>
    <property type="match status" value="1"/>
</dbReference>
<dbReference type="Pfam" id="PF02863">
    <property type="entry name" value="Arg_repressor_C"/>
    <property type="match status" value="1"/>
</dbReference>
<dbReference type="PRINTS" id="PR01467">
    <property type="entry name" value="ARGREPRESSOR"/>
</dbReference>
<dbReference type="SUPFAM" id="SSF55252">
    <property type="entry name" value="C-terminal domain of arginine repressor"/>
    <property type="match status" value="1"/>
</dbReference>
<dbReference type="SUPFAM" id="SSF46785">
    <property type="entry name" value="Winged helix' DNA-binding domain"/>
    <property type="match status" value="1"/>
</dbReference>
<reference key="1">
    <citation type="submission" date="2008-06" db="EMBL/GenBank/DDBJ databases">
        <title>Genome and proteome analysis of A. pleuropneumoniae serotype 7.</title>
        <authorList>
            <person name="Linke B."/>
            <person name="Buettner F."/>
            <person name="Martinez-Arias R."/>
            <person name="Goesmann A."/>
            <person name="Baltes N."/>
            <person name="Tegetmeyer H."/>
            <person name="Singh M."/>
            <person name="Gerlach G.F."/>
        </authorList>
    </citation>
    <scope>NUCLEOTIDE SEQUENCE [LARGE SCALE GENOMIC DNA]</scope>
    <source>
        <strain>AP76</strain>
    </source>
</reference>
<feature type="chain" id="PRO_1000097854" description="Arginine repressor">
    <location>
        <begin position="1"/>
        <end position="153"/>
    </location>
</feature>
<keyword id="KW-0028">Amino-acid biosynthesis</keyword>
<keyword id="KW-0055">Arginine biosynthesis</keyword>
<keyword id="KW-0963">Cytoplasm</keyword>
<keyword id="KW-0238">DNA-binding</keyword>
<keyword id="KW-0678">Repressor</keyword>
<keyword id="KW-0804">Transcription</keyword>
<keyword id="KW-0805">Transcription regulation</keyword>
<sequence>MEKLDKLSEAFKALLKQEKFGSQSEIVTALQELGFENINQSKVSRMLSKFGAVRTRNTKMEMVYQLPAELGVPTTSSPLKNLVVDIDHNDVLIVVKTSPGAAQLIARLLDSMGKSEGILGTIAGDDTIFITPTKVTPVEVLMQNVTELFESSF</sequence>
<organism>
    <name type="scientific">Actinobacillus pleuropneumoniae serotype 7 (strain AP76)</name>
    <dbReference type="NCBI Taxonomy" id="537457"/>
    <lineage>
        <taxon>Bacteria</taxon>
        <taxon>Pseudomonadati</taxon>
        <taxon>Pseudomonadota</taxon>
        <taxon>Gammaproteobacteria</taxon>
        <taxon>Pasteurellales</taxon>
        <taxon>Pasteurellaceae</taxon>
        <taxon>Actinobacillus</taxon>
    </lineage>
</organism>
<accession>B3H268</accession>
<name>ARGR_ACTP7</name>
<proteinExistence type="inferred from homology"/>
<protein>
    <recommendedName>
        <fullName evidence="1">Arginine repressor</fullName>
    </recommendedName>
</protein>
<comment type="function">
    <text evidence="1">Regulates arginine biosynthesis genes.</text>
</comment>
<comment type="pathway">
    <text>Amino-acid biosynthesis; L-arginine biosynthesis [regulation].</text>
</comment>
<comment type="subcellular location">
    <subcellularLocation>
        <location evidence="1">Cytoplasm</location>
    </subcellularLocation>
</comment>
<comment type="similarity">
    <text evidence="1">Belongs to the ArgR family.</text>
</comment>
<evidence type="ECO:0000255" key="1">
    <source>
        <dbReference type="HAMAP-Rule" id="MF_00173"/>
    </source>
</evidence>